<keyword id="KW-0004">4Fe-4S</keyword>
<keyword id="KW-0963">Cytoplasm</keyword>
<keyword id="KW-0408">Iron</keyword>
<keyword id="KW-0411">Iron-sulfur</keyword>
<keyword id="KW-0479">Metal-binding</keyword>
<keyword id="KW-1185">Reference proteome</keyword>
<keyword id="KW-0949">S-adenosyl-L-methionine</keyword>
<keyword id="KW-0808">Transferase</keyword>
<dbReference type="EC" id="2.8.1.8" evidence="1"/>
<dbReference type="EMBL" id="AE016828">
    <property type="protein sequence ID" value="AAO90774.1"/>
    <property type="molecule type" value="Genomic_DNA"/>
</dbReference>
<dbReference type="RefSeq" id="NP_820260.1">
    <property type="nucleotide sequence ID" value="NC_002971.4"/>
</dbReference>
<dbReference type="RefSeq" id="WP_010958112.1">
    <property type="nucleotide sequence ID" value="NZ_CCYB01000031.1"/>
</dbReference>
<dbReference type="SMR" id="Q83C63"/>
<dbReference type="STRING" id="227377.CBU_1266"/>
<dbReference type="EnsemblBacteria" id="AAO90774">
    <property type="protein sequence ID" value="AAO90774"/>
    <property type="gene ID" value="CBU_1266"/>
</dbReference>
<dbReference type="GeneID" id="1209171"/>
<dbReference type="KEGG" id="cbu:CBU_1266"/>
<dbReference type="PATRIC" id="fig|227377.7.peg.1256"/>
<dbReference type="eggNOG" id="COG0320">
    <property type="taxonomic scope" value="Bacteria"/>
</dbReference>
<dbReference type="HOGENOM" id="CLU_033144_2_1_6"/>
<dbReference type="OrthoDB" id="9787898at2"/>
<dbReference type="UniPathway" id="UPA00538">
    <property type="reaction ID" value="UER00593"/>
</dbReference>
<dbReference type="Proteomes" id="UP000002671">
    <property type="component" value="Chromosome"/>
</dbReference>
<dbReference type="GO" id="GO:0005737">
    <property type="term" value="C:cytoplasm"/>
    <property type="evidence" value="ECO:0007669"/>
    <property type="project" value="UniProtKB-SubCell"/>
</dbReference>
<dbReference type="GO" id="GO:0051539">
    <property type="term" value="F:4 iron, 4 sulfur cluster binding"/>
    <property type="evidence" value="ECO:0007669"/>
    <property type="project" value="UniProtKB-UniRule"/>
</dbReference>
<dbReference type="GO" id="GO:0016992">
    <property type="term" value="F:lipoate synthase activity"/>
    <property type="evidence" value="ECO:0007669"/>
    <property type="project" value="UniProtKB-UniRule"/>
</dbReference>
<dbReference type="GO" id="GO:0046872">
    <property type="term" value="F:metal ion binding"/>
    <property type="evidence" value="ECO:0007669"/>
    <property type="project" value="UniProtKB-KW"/>
</dbReference>
<dbReference type="CDD" id="cd01335">
    <property type="entry name" value="Radical_SAM"/>
    <property type="match status" value="1"/>
</dbReference>
<dbReference type="FunFam" id="3.20.20.70:FF:000040">
    <property type="entry name" value="Lipoyl synthase"/>
    <property type="match status" value="1"/>
</dbReference>
<dbReference type="Gene3D" id="3.20.20.70">
    <property type="entry name" value="Aldolase class I"/>
    <property type="match status" value="1"/>
</dbReference>
<dbReference type="HAMAP" id="MF_00206">
    <property type="entry name" value="Lipoyl_synth"/>
    <property type="match status" value="1"/>
</dbReference>
<dbReference type="InterPro" id="IPR013785">
    <property type="entry name" value="Aldolase_TIM"/>
</dbReference>
<dbReference type="InterPro" id="IPR006638">
    <property type="entry name" value="Elp3/MiaA/NifB-like_rSAM"/>
</dbReference>
<dbReference type="InterPro" id="IPR003698">
    <property type="entry name" value="Lipoyl_synth"/>
</dbReference>
<dbReference type="InterPro" id="IPR007197">
    <property type="entry name" value="rSAM"/>
</dbReference>
<dbReference type="NCBIfam" id="TIGR00510">
    <property type="entry name" value="lipA"/>
    <property type="match status" value="1"/>
</dbReference>
<dbReference type="NCBIfam" id="NF004019">
    <property type="entry name" value="PRK05481.1"/>
    <property type="match status" value="1"/>
</dbReference>
<dbReference type="NCBIfam" id="NF009544">
    <property type="entry name" value="PRK12928.1"/>
    <property type="match status" value="1"/>
</dbReference>
<dbReference type="PANTHER" id="PTHR10949">
    <property type="entry name" value="LIPOYL SYNTHASE"/>
    <property type="match status" value="1"/>
</dbReference>
<dbReference type="PANTHER" id="PTHR10949:SF0">
    <property type="entry name" value="LIPOYL SYNTHASE, MITOCHONDRIAL"/>
    <property type="match status" value="1"/>
</dbReference>
<dbReference type="Pfam" id="PF04055">
    <property type="entry name" value="Radical_SAM"/>
    <property type="match status" value="1"/>
</dbReference>
<dbReference type="PIRSF" id="PIRSF005963">
    <property type="entry name" value="Lipoyl_synth"/>
    <property type="match status" value="1"/>
</dbReference>
<dbReference type="SFLD" id="SFLDF00271">
    <property type="entry name" value="lipoyl_synthase"/>
    <property type="match status" value="1"/>
</dbReference>
<dbReference type="SFLD" id="SFLDS00029">
    <property type="entry name" value="Radical_SAM"/>
    <property type="match status" value="1"/>
</dbReference>
<dbReference type="SMART" id="SM00729">
    <property type="entry name" value="Elp3"/>
    <property type="match status" value="1"/>
</dbReference>
<dbReference type="SUPFAM" id="SSF102114">
    <property type="entry name" value="Radical SAM enzymes"/>
    <property type="match status" value="1"/>
</dbReference>
<dbReference type="PROSITE" id="PS51918">
    <property type="entry name" value="RADICAL_SAM"/>
    <property type="match status" value="1"/>
</dbReference>
<evidence type="ECO:0000255" key="1">
    <source>
        <dbReference type="HAMAP-Rule" id="MF_00206"/>
    </source>
</evidence>
<evidence type="ECO:0000255" key="2">
    <source>
        <dbReference type="PROSITE-ProRule" id="PRU01266"/>
    </source>
</evidence>
<organism>
    <name type="scientific">Coxiella burnetii (strain RSA 493 / Nine Mile phase I)</name>
    <dbReference type="NCBI Taxonomy" id="227377"/>
    <lineage>
        <taxon>Bacteria</taxon>
        <taxon>Pseudomonadati</taxon>
        <taxon>Pseudomonadota</taxon>
        <taxon>Gammaproteobacteria</taxon>
        <taxon>Legionellales</taxon>
        <taxon>Coxiellaceae</taxon>
        <taxon>Coxiella</taxon>
    </lineage>
</organism>
<accession>Q83C63</accession>
<name>LIPA_COXBU</name>
<protein>
    <recommendedName>
        <fullName evidence="1">Lipoyl synthase</fullName>
        <ecNumber evidence="1">2.8.1.8</ecNumber>
    </recommendedName>
    <alternativeName>
        <fullName evidence="1">Lip-syn</fullName>
        <shortName evidence="1">LS</shortName>
    </alternativeName>
    <alternativeName>
        <fullName evidence="1">Lipoate synthase</fullName>
    </alternativeName>
    <alternativeName>
        <fullName evidence="1">Lipoic acid synthase</fullName>
    </alternativeName>
    <alternativeName>
        <fullName evidence="1">Sulfur insertion protein LipA</fullName>
    </alternativeName>
</protein>
<reference key="1">
    <citation type="journal article" date="2003" name="Proc. Natl. Acad. Sci. U.S.A.">
        <title>Complete genome sequence of the Q-fever pathogen, Coxiella burnetii.</title>
        <authorList>
            <person name="Seshadri R."/>
            <person name="Paulsen I.T."/>
            <person name="Eisen J.A."/>
            <person name="Read T.D."/>
            <person name="Nelson K.E."/>
            <person name="Nelson W.C."/>
            <person name="Ward N.L."/>
            <person name="Tettelin H."/>
            <person name="Davidsen T.M."/>
            <person name="Beanan M.J."/>
            <person name="DeBoy R.T."/>
            <person name="Daugherty S.C."/>
            <person name="Brinkac L.M."/>
            <person name="Madupu R."/>
            <person name="Dodson R.J."/>
            <person name="Khouri H.M."/>
            <person name="Lee K.H."/>
            <person name="Carty H.A."/>
            <person name="Scanlan D."/>
            <person name="Heinzen R.A."/>
            <person name="Thompson H.A."/>
            <person name="Samuel J.E."/>
            <person name="Fraser C.M."/>
            <person name="Heidelberg J.F."/>
        </authorList>
    </citation>
    <scope>NUCLEOTIDE SEQUENCE [LARGE SCALE GENOMIC DNA]</scope>
    <source>
        <strain>RSA 493 / Nine Mile phase I</strain>
    </source>
</reference>
<proteinExistence type="inferred from homology"/>
<feature type="chain" id="PRO_0000102311" description="Lipoyl synthase">
    <location>
        <begin position="1"/>
        <end position="315"/>
    </location>
</feature>
<feature type="domain" description="Radical SAM core" evidence="2">
    <location>
        <begin position="73"/>
        <end position="291"/>
    </location>
</feature>
<feature type="binding site" evidence="1">
    <location>
        <position position="62"/>
    </location>
    <ligand>
        <name>[4Fe-4S] cluster</name>
        <dbReference type="ChEBI" id="CHEBI:49883"/>
        <label>1</label>
    </ligand>
</feature>
<feature type="binding site" evidence="1">
    <location>
        <position position="67"/>
    </location>
    <ligand>
        <name>[4Fe-4S] cluster</name>
        <dbReference type="ChEBI" id="CHEBI:49883"/>
        <label>1</label>
    </ligand>
</feature>
<feature type="binding site" evidence="1">
    <location>
        <position position="73"/>
    </location>
    <ligand>
        <name>[4Fe-4S] cluster</name>
        <dbReference type="ChEBI" id="CHEBI:49883"/>
        <label>1</label>
    </ligand>
</feature>
<feature type="binding site" evidence="1">
    <location>
        <position position="88"/>
    </location>
    <ligand>
        <name>[4Fe-4S] cluster</name>
        <dbReference type="ChEBI" id="CHEBI:49883"/>
        <label>2</label>
        <note>4Fe-4S-S-AdoMet</note>
    </ligand>
</feature>
<feature type="binding site" evidence="1">
    <location>
        <position position="92"/>
    </location>
    <ligand>
        <name>[4Fe-4S] cluster</name>
        <dbReference type="ChEBI" id="CHEBI:49883"/>
        <label>2</label>
        <note>4Fe-4S-S-AdoMet</note>
    </ligand>
</feature>
<feature type="binding site" evidence="1">
    <location>
        <position position="95"/>
    </location>
    <ligand>
        <name>[4Fe-4S] cluster</name>
        <dbReference type="ChEBI" id="CHEBI:49883"/>
        <label>2</label>
        <note>4Fe-4S-S-AdoMet</note>
    </ligand>
</feature>
<feature type="binding site" evidence="1">
    <location>
        <position position="302"/>
    </location>
    <ligand>
        <name>[4Fe-4S] cluster</name>
        <dbReference type="ChEBI" id="CHEBI:49883"/>
        <label>1</label>
    </ligand>
</feature>
<comment type="function">
    <text evidence="1">Catalyzes the radical-mediated insertion of two sulfur atoms into the C-6 and C-8 positions of the octanoyl moiety bound to the lipoyl domains of lipoate-dependent enzymes, thereby converting the octanoylated domains into lipoylated derivatives.</text>
</comment>
<comment type="catalytic activity">
    <reaction evidence="1">
        <text>[[Fe-S] cluster scaffold protein carrying a second [4Fe-4S](2+) cluster] + N(6)-octanoyl-L-lysyl-[protein] + 2 oxidized [2Fe-2S]-[ferredoxin] + 2 S-adenosyl-L-methionine + 4 H(+) = [[Fe-S] cluster scaffold protein] + N(6)-[(R)-dihydrolipoyl]-L-lysyl-[protein] + 4 Fe(3+) + 2 hydrogen sulfide + 2 5'-deoxyadenosine + 2 L-methionine + 2 reduced [2Fe-2S]-[ferredoxin]</text>
        <dbReference type="Rhea" id="RHEA:16585"/>
        <dbReference type="Rhea" id="RHEA-COMP:9928"/>
        <dbReference type="Rhea" id="RHEA-COMP:10000"/>
        <dbReference type="Rhea" id="RHEA-COMP:10001"/>
        <dbReference type="Rhea" id="RHEA-COMP:10475"/>
        <dbReference type="Rhea" id="RHEA-COMP:14568"/>
        <dbReference type="Rhea" id="RHEA-COMP:14569"/>
        <dbReference type="ChEBI" id="CHEBI:15378"/>
        <dbReference type="ChEBI" id="CHEBI:17319"/>
        <dbReference type="ChEBI" id="CHEBI:29034"/>
        <dbReference type="ChEBI" id="CHEBI:29919"/>
        <dbReference type="ChEBI" id="CHEBI:33722"/>
        <dbReference type="ChEBI" id="CHEBI:33737"/>
        <dbReference type="ChEBI" id="CHEBI:33738"/>
        <dbReference type="ChEBI" id="CHEBI:57844"/>
        <dbReference type="ChEBI" id="CHEBI:59789"/>
        <dbReference type="ChEBI" id="CHEBI:78809"/>
        <dbReference type="ChEBI" id="CHEBI:83100"/>
        <dbReference type="EC" id="2.8.1.8"/>
    </reaction>
</comment>
<comment type="cofactor">
    <cofactor evidence="1">
        <name>[4Fe-4S] cluster</name>
        <dbReference type="ChEBI" id="CHEBI:49883"/>
    </cofactor>
    <text evidence="1">Binds 2 [4Fe-4S] clusters per subunit. One cluster is coordinated with 3 cysteines and an exchangeable S-adenosyl-L-methionine.</text>
</comment>
<comment type="pathway">
    <text evidence="1">Protein modification; protein lipoylation via endogenous pathway; protein N(6)-(lipoyl)lysine from octanoyl-[acyl-carrier-protein]: step 2/2.</text>
</comment>
<comment type="subcellular location">
    <subcellularLocation>
        <location evidence="1">Cytoplasm</location>
    </subcellularLocation>
</comment>
<comment type="similarity">
    <text evidence="1">Belongs to the radical SAM superfamily. Lipoyl synthase family.</text>
</comment>
<gene>
    <name evidence="1" type="primary">lipA</name>
    <name type="ordered locus">CBU_1266</name>
</gene>
<sequence length="315" mass="35604">MTTYDPSQKSLGKEKLSRIPVKIEATHTPLRKPDWIRIRLSTDSKVSQLKKLLRENHLVTVCEEASCPNLNECFGHGTATFMIMGDKCTRRCSFCDVGHGRPDPLDPEEPVNLANTVSIMSLRYVVITSVDRDDLRDGGAQHYAQCINAVREKNPGIKVEVLVPDFRGRMEKALDQLAQGLPDVFNHNIETAPRLYKQARPGADYPWSLALLQTFKKRFPGIPTKSGMMLGLGETREEVEMVMRDLRQHEVDRLTLGQYLQPTRYHMPVDRYVTPQEFQELGELAKKLGFSNVASGPLVRSSYHADLQAQGERVS</sequence>